<keyword id="KW-1185">Reference proteome</keyword>
<keyword id="KW-0687">Ribonucleoprotein</keyword>
<keyword id="KW-0689">Ribosomal protein</keyword>
<organism>
    <name type="scientific">Bradyrhizobium sp. (strain ORS 278)</name>
    <dbReference type="NCBI Taxonomy" id="114615"/>
    <lineage>
        <taxon>Bacteria</taxon>
        <taxon>Pseudomonadati</taxon>
        <taxon>Pseudomonadota</taxon>
        <taxon>Alphaproteobacteria</taxon>
        <taxon>Hyphomicrobiales</taxon>
        <taxon>Nitrobacteraceae</taxon>
        <taxon>Bradyrhizobium</taxon>
    </lineage>
</organism>
<comment type="similarity">
    <text evidence="1">Belongs to the bacterial ribosomal protein bL36 family.</text>
</comment>
<proteinExistence type="inferred from homology"/>
<evidence type="ECO:0000255" key="1">
    <source>
        <dbReference type="HAMAP-Rule" id="MF_00251"/>
    </source>
</evidence>
<evidence type="ECO:0000305" key="2"/>
<name>RL36_BRASO</name>
<sequence length="41" mass="4990">MKVRNSLKSLRGRHRANRLVRRKGRVYVINKVQRRFKARQG</sequence>
<reference key="1">
    <citation type="journal article" date="2007" name="Science">
        <title>Legumes symbioses: absence of nod genes in photosynthetic bradyrhizobia.</title>
        <authorList>
            <person name="Giraud E."/>
            <person name="Moulin L."/>
            <person name="Vallenet D."/>
            <person name="Barbe V."/>
            <person name="Cytryn E."/>
            <person name="Avarre J.-C."/>
            <person name="Jaubert M."/>
            <person name="Simon D."/>
            <person name="Cartieaux F."/>
            <person name="Prin Y."/>
            <person name="Bena G."/>
            <person name="Hannibal L."/>
            <person name="Fardoux J."/>
            <person name="Kojadinovic M."/>
            <person name="Vuillet L."/>
            <person name="Lajus A."/>
            <person name="Cruveiller S."/>
            <person name="Rouy Z."/>
            <person name="Mangenot S."/>
            <person name="Segurens B."/>
            <person name="Dossat C."/>
            <person name="Franck W.L."/>
            <person name="Chang W.-S."/>
            <person name="Saunders E."/>
            <person name="Bruce D."/>
            <person name="Richardson P."/>
            <person name="Normand P."/>
            <person name="Dreyfus B."/>
            <person name="Pignol D."/>
            <person name="Stacey G."/>
            <person name="Emerich D."/>
            <person name="Vermeglio A."/>
            <person name="Medigue C."/>
            <person name="Sadowsky M."/>
        </authorList>
    </citation>
    <scope>NUCLEOTIDE SEQUENCE [LARGE SCALE GENOMIC DNA]</scope>
    <source>
        <strain>ORS 278</strain>
    </source>
</reference>
<feature type="chain" id="PRO_0000302165" description="Large ribosomal subunit protein bL36">
    <location>
        <begin position="1"/>
        <end position="41"/>
    </location>
</feature>
<accession>A4Z0W1</accession>
<dbReference type="EMBL" id="CU234118">
    <property type="protein sequence ID" value="CAL79787.1"/>
    <property type="molecule type" value="Genomic_DNA"/>
</dbReference>
<dbReference type="SMR" id="A4Z0W1"/>
<dbReference type="STRING" id="114615.BRADO6137"/>
<dbReference type="KEGG" id="bra:BRADO6137"/>
<dbReference type="eggNOG" id="COG0257">
    <property type="taxonomic scope" value="Bacteria"/>
</dbReference>
<dbReference type="HOGENOM" id="CLU_135723_3_0_5"/>
<dbReference type="OrthoDB" id="9801558at2"/>
<dbReference type="Proteomes" id="UP000001994">
    <property type="component" value="Chromosome"/>
</dbReference>
<dbReference type="GO" id="GO:1990904">
    <property type="term" value="C:ribonucleoprotein complex"/>
    <property type="evidence" value="ECO:0007669"/>
    <property type="project" value="UniProtKB-KW"/>
</dbReference>
<dbReference type="GO" id="GO:0005840">
    <property type="term" value="C:ribosome"/>
    <property type="evidence" value="ECO:0007669"/>
    <property type="project" value="UniProtKB-KW"/>
</dbReference>
<dbReference type="GO" id="GO:0003735">
    <property type="term" value="F:structural constituent of ribosome"/>
    <property type="evidence" value="ECO:0007669"/>
    <property type="project" value="InterPro"/>
</dbReference>
<dbReference type="GO" id="GO:0006412">
    <property type="term" value="P:translation"/>
    <property type="evidence" value="ECO:0007669"/>
    <property type="project" value="UniProtKB-UniRule"/>
</dbReference>
<dbReference type="HAMAP" id="MF_00251">
    <property type="entry name" value="Ribosomal_bL36"/>
    <property type="match status" value="1"/>
</dbReference>
<dbReference type="InterPro" id="IPR000473">
    <property type="entry name" value="Ribosomal_bL36"/>
</dbReference>
<dbReference type="InterPro" id="IPR035977">
    <property type="entry name" value="Ribosomal_bL36_sp"/>
</dbReference>
<dbReference type="InterPro" id="IPR047621">
    <property type="entry name" value="Ribosomal_L36_bact"/>
</dbReference>
<dbReference type="NCBIfam" id="NF002021">
    <property type="entry name" value="PRK00831.1"/>
    <property type="match status" value="1"/>
</dbReference>
<dbReference type="PANTHER" id="PTHR47781">
    <property type="entry name" value="50S RIBOSOMAL PROTEIN L36 2"/>
    <property type="match status" value="1"/>
</dbReference>
<dbReference type="PANTHER" id="PTHR47781:SF1">
    <property type="entry name" value="LARGE RIBOSOMAL SUBUNIT PROTEIN BL36B"/>
    <property type="match status" value="1"/>
</dbReference>
<dbReference type="Pfam" id="PF00444">
    <property type="entry name" value="Ribosomal_L36"/>
    <property type="match status" value="1"/>
</dbReference>
<dbReference type="SUPFAM" id="SSF57840">
    <property type="entry name" value="Ribosomal protein L36"/>
    <property type="match status" value="1"/>
</dbReference>
<dbReference type="PROSITE" id="PS00828">
    <property type="entry name" value="RIBOSOMAL_L36"/>
    <property type="match status" value="1"/>
</dbReference>
<protein>
    <recommendedName>
        <fullName evidence="1">Large ribosomal subunit protein bL36</fullName>
    </recommendedName>
    <alternativeName>
        <fullName evidence="2">50S ribosomal protein L36</fullName>
    </alternativeName>
</protein>
<gene>
    <name evidence="1" type="primary">rpmJ</name>
    <name type="ordered locus">BRADO6137</name>
</gene>